<dbReference type="EMBL" id="AACD01000051">
    <property type="protein sequence ID" value="EAA63575.1"/>
    <property type="molecule type" value="Genomic_DNA"/>
</dbReference>
<dbReference type="EMBL" id="BN001306">
    <property type="protein sequence ID" value="CBF83582.1"/>
    <property type="molecule type" value="Genomic_DNA"/>
</dbReference>
<dbReference type="RefSeq" id="XP_660608.1">
    <property type="nucleotide sequence ID" value="XM_655516.1"/>
</dbReference>
<dbReference type="SMR" id="Q5B8X6"/>
<dbReference type="FunCoup" id="Q5B8X6">
    <property type="interactions" value="10"/>
</dbReference>
<dbReference type="STRING" id="227321.Q5B8X6"/>
<dbReference type="EnsemblFungi" id="CBF83582">
    <property type="protein sequence ID" value="CBF83582"/>
    <property type="gene ID" value="ANIA_03004"/>
</dbReference>
<dbReference type="KEGG" id="ani:ANIA_03004"/>
<dbReference type="eggNOG" id="KOG2372">
    <property type="taxonomic scope" value="Eukaryota"/>
</dbReference>
<dbReference type="HOGENOM" id="CLU_029204_0_1_1"/>
<dbReference type="InParanoid" id="Q5B8X6"/>
<dbReference type="OMA" id="MPSVMPW"/>
<dbReference type="OrthoDB" id="26679at2759"/>
<dbReference type="Proteomes" id="UP000000560">
    <property type="component" value="Chromosome VI"/>
</dbReference>
<dbReference type="GO" id="GO:0005739">
    <property type="term" value="C:mitochondrion"/>
    <property type="evidence" value="ECO:0007669"/>
    <property type="project" value="UniProtKB-SubCell"/>
</dbReference>
<dbReference type="GO" id="GO:0005634">
    <property type="term" value="C:nucleus"/>
    <property type="evidence" value="ECO:0000318"/>
    <property type="project" value="GO_Central"/>
</dbReference>
<dbReference type="GO" id="GO:0006979">
    <property type="term" value="P:response to oxidative stress"/>
    <property type="evidence" value="ECO:0000318"/>
    <property type="project" value="GO_Central"/>
</dbReference>
<dbReference type="InterPro" id="IPR006571">
    <property type="entry name" value="TLDc_dom"/>
</dbReference>
<dbReference type="PANTHER" id="PTHR23354:SF62">
    <property type="entry name" value="MUSTARD, ISOFORM V"/>
    <property type="match status" value="1"/>
</dbReference>
<dbReference type="PANTHER" id="PTHR23354">
    <property type="entry name" value="NUCLEOLAR PROTEIN 7/ESTROGEN RECEPTOR COACTIVATOR-RELATED"/>
    <property type="match status" value="1"/>
</dbReference>
<dbReference type="Pfam" id="PF07534">
    <property type="entry name" value="TLD"/>
    <property type="match status" value="1"/>
</dbReference>
<dbReference type="SMART" id="SM00584">
    <property type="entry name" value="TLDc"/>
    <property type="match status" value="1"/>
</dbReference>
<dbReference type="PROSITE" id="PS51886">
    <property type="entry name" value="TLDC"/>
    <property type="match status" value="1"/>
</dbReference>
<sequence>MSSASQPDLSTPTTPATSTSSSGTDPPHLNSNDKKSSSSTSLHQSAASYFTYPVTHVVSGLYRRLTDPPTTNSANSTSNNMMSRLRRQNPNPNPNPSSSSSSISSSSQHPVFTPVRTVSPFQPPPLTPLTLLANEETTPIPLAPQNQLLSRALAEEIRLLVPPRLQLVNSWRLAYSLDRDGASLSTLYENCRSVSARSPRAGYVLVVRDASPSASTIFGAYMTDPPHPDSHYFGTGECFLWRASVLRPPPASLSMADGDGGVYSEEALERAGLPPPPSADTTNVGRSTTLRGEKAQPKSLAPHTHGLAQGGATNSGTTTPDRIRFKAFPYSGVNDYMMFCETGFLSLGGGSTVLGFTSAHHRFGYLISNALGRYGEMEANISKDDMLPRGIHY</sequence>
<keyword id="KW-0496">Mitochondrion</keyword>
<keyword id="KW-1185">Reference proteome</keyword>
<accession>Q5B8X6</accession>
<accession>C8VIW9</accession>
<feature type="chain" id="PRO_0000058115" description="Oxidation resistance protein 1">
    <location>
        <begin position="1"/>
        <end position="393"/>
    </location>
</feature>
<feature type="domain" description="TLDc" evidence="2">
    <location>
        <begin position="147"/>
        <end position="393"/>
    </location>
</feature>
<feature type="region of interest" description="Disordered" evidence="3">
    <location>
        <begin position="1"/>
        <end position="40"/>
    </location>
</feature>
<feature type="region of interest" description="Disordered" evidence="3">
    <location>
        <begin position="63"/>
        <end position="114"/>
    </location>
</feature>
<feature type="region of interest" description="Disordered" evidence="3">
    <location>
        <begin position="269"/>
        <end position="319"/>
    </location>
</feature>
<feature type="compositionally biased region" description="Low complexity" evidence="3">
    <location>
        <begin position="7"/>
        <end position="30"/>
    </location>
</feature>
<feature type="compositionally biased region" description="Low complexity" evidence="3">
    <location>
        <begin position="70"/>
        <end position="83"/>
    </location>
</feature>
<feature type="compositionally biased region" description="Low complexity" evidence="3">
    <location>
        <begin position="96"/>
        <end position="107"/>
    </location>
</feature>
<feature type="compositionally biased region" description="Polar residues" evidence="3">
    <location>
        <begin position="279"/>
        <end position="290"/>
    </location>
</feature>
<protein>
    <recommendedName>
        <fullName>Oxidation resistance protein 1</fullName>
    </recommendedName>
</protein>
<name>OXR1_EMENI</name>
<gene>
    <name type="primary">oxr1</name>
    <name type="ORF">AN3004</name>
</gene>
<organism>
    <name type="scientific">Emericella nidulans (strain FGSC A4 / ATCC 38163 / CBS 112.46 / NRRL 194 / M139)</name>
    <name type="common">Aspergillus nidulans</name>
    <dbReference type="NCBI Taxonomy" id="227321"/>
    <lineage>
        <taxon>Eukaryota</taxon>
        <taxon>Fungi</taxon>
        <taxon>Dikarya</taxon>
        <taxon>Ascomycota</taxon>
        <taxon>Pezizomycotina</taxon>
        <taxon>Eurotiomycetes</taxon>
        <taxon>Eurotiomycetidae</taxon>
        <taxon>Eurotiales</taxon>
        <taxon>Aspergillaceae</taxon>
        <taxon>Aspergillus</taxon>
        <taxon>Aspergillus subgen. Nidulantes</taxon>
    </lineage>
</organism>
<comment type="function">
    <text evidence="1">May be involved in protection from oxidative damage.</text>
</comment>
<comment type="subcellular location">
    <subcellularLocation>
        <location evidence="1">Mitochondrion</location>
    </subcellularLocation>
</comment>
<comment type="similarity">
    <text evidence="4">Belongs to the OXR1 family.</text>
</comment>
<evidence type="ECO:0000250" key="1"/>
<evidence type="ECO:0000255" key="2">
    <source>
        <dbReference type="PROSITE-ProRule" id="PRU01234"/>
    </source>
</evidence>
<evidence type="ECO:0000256" key="3">
    <source>
        <dbReference type="SAM" id="MobiDB-lite"/>
    </source>
</evidence>
<evidence type="ECO:0000305" key="4"/>
<reference key="1">
    <citation type="journal article" date="2005" name="Nature">
        <title>Sequencing of Aspergillus nidulans and comparative analysis with A. fumigatus and A. oryzae.</title>
        <authorList>
            <person name="Galagan J.E."/>
            <person name="Calvo S.E."/>
            <person name="Cuomo C."/>
            <person name="Ma L.-J."/>
            <person name="Wortman J.R."/>
            <person name="Batzoglou S."/>
            <person name="Lee S.-I."/>
            <person name="Bastuerkmen M."/>
            <person name="Spevak C.C."/>
            <person name="Clutterbuck J."/>
            <person name="Kapitonov V."/>
            <person name="Jurka J."/>
            <person name="Scazzocchio C."/>
            <person name="Farman M.L."/>
            <person name="Butler J."/>
            <person name="Purcell S."/>
            <person name="Harris S."/>
            <person name="Braus G.H."/>
            <person name="Draht O."/>
            <person name="Busch S."/>
            <person name="D'Enfert C."/>
            <person name="Bouchier C."/>
            <person name="Goldman G.H."/>
            <person name="Bell-Pedersen D."/>
            <person name="Griffiths-Jones S."/>
            <person name="Doonan J.H."/>
            <person name="Yu J."/>
            <person name="Vienken K."/>
            <person name="Pain A."/>
            <person name="Freitag M."/>
            <person name="Selker E.U."/>
            <person name="Archer D.B."/>
            <person name="Penalva M.A."/>
            <person name="Oakley B.R."/>
            <person name="Momany M."/>
            <person name="Tanaka T."/>
            <person name="Kumagai T."/>
            <person name="Asai K."/>
            <person name="Machida M."/>
            <person name="Nierman W.C."/>
            <person name="Denning D.W."/>
            <person name="Caddick M.X."/>
            <person name="Hynes M."/>
            <person name="Paoletti M."/>
            <person name="Fischer R."/>
            <person name="Miller B.L."/>
            <person name="Dyer P.S."/>
            <person name="Sachs M.S."/>
            <person name="Osmani S.A."/>
            <person name="Birren B.W."/>
        </authorList>
    </citation>
    <scope>NUCLEOTIDE SEQUENCE [LARGE SCALE GENOMIC DNA]</scope>
    <source>
        <strain>FGSC A4 / ATCC 38163 / CBS 112.46 / NRRL 194 / M139</strain>
    </source>
</reference>
<reference key="2">
    <citation type="journal article" date="2009" name="Fungal Genet. Biol.">
        <title>The 2008 update of the Aspergillus nidulans genome annotation: a community effort.</title>
        <authorList>
            <person name="Wortman J.R."/>
            <person name="Gilsenan J.M."/>
            <person name="Joardar V."/>
            <person name="Deegan J."/>
            <person name="Clutterbuck J."/>
            <person name="Andersen M.R."/>
            <person name="Archer D."/>
            <person name="Bencina M."/>
            <person name="Braus G."/>
            <person name="Coutinho P."/>
            <person name="von Dohren H."/>
            <person name="Doonan J."/>
            <person name="Driessen A.J."/>
            <person name="Durek P."/>
            <person name="Espeso E."/>
            <person name="Fekete E."/>
            <person name="Flipphi M."/>
            <person name="Estrada C.G."/>
            <person name="Geysens S."/>
            <person name="Goldman G."/>
            <person name="de Groot P.W."/>
            <person name="Hansen K."/>
            <person name="Harris S.D."/>
            <person name="Heinekamp T."/>
            <person name="Helmstaedt K."/>
            <person name="Henrissat B."/>
            <person name="Hofmann G."/>
            <person name="Homan T."/>
            <person name="Horio T."/>
            <person name="Horiuchi H."/>
            <person name="James S."/>
            <person name="Jones M."/>
            <person name="Karaffa L."/>
            <person name="Karanyi Z."/>
            <person name="Kato M."/>
            <person name="Keller N."/>
            <person name="Kelly D.E."/>
            <person name="Kiel J.A."/>
            <person name="Kim J.M."/>
            <person name="van der Klei I.J."/>
            <person name="Klis F.M."/>
            <person name="Kovalchuk A."/>
            <person name="Krasevec N."/>
            <person name="Kubicek C.P."/>
            <person name="Liu B."/>
            <person name="Maccabe A."/>
            <person name="Meyer V."/>
            <person name="Mirabito P."/>
            <person name="Miskei M."/>
            <person name="Mos M."/>
            <person name="Mullins J."/>
            <person name="Nelson D.R."/>
            <person name="Nielsen J."/>
            <person name="Oakley B.R."/>
            <person name="Osmani S.A."/>
            <person name="Pakula T."/>
            <person name="Paszewski A."/>
            <person name="Paulsen I."/>
            <person name="Pilsyk S."/>
            <person name="Pocsi I."/>
            <person name="Punt P.J."/>
            <person name="Ram A.F."/>
            <person name="Ren Q."/>
            <person name="Robellet X."/>
            <person name="Robson G."/>
            <person name="Seiboth B."/>
            <person name="van Solingen P."/>
            <person name="Specht T."/>
            <person name="Sun J."/>
            <person name="Taheri-Talesh N."/>
            <person name="Takeshita N."/>
            <person name="Ussery D."/>
            <person name="vanKuyk P.A."/>
            <person name="Visser H."/>
            <person name="van de Vondervoort P.J."/>
            <person name="de Vries R.P."/>
            <person name="Walton J."/>
            <person name="Xiang X."/>
            <person name="Xiong Y."/>
            <person name="Zeng A.P."/>
            <person name="Brandt B.W."/>
            <person name="Cornell M.J."/>
            <person name="van den Hondel C.A."/>
            <person name="Visser J."/>
            <person name="Oliver S.G."/>
            <person name="Turner G."/>
        </authorList>
    </citation>
    <scope>GENOME REANNOTATION</scope>
    <source>
        <strain>FGSC A4 / ATCC 38163 / CBS 112.46 / NRRL 194 / M139</strain>
    </source>
</reference>
<proteinExistence type="inferred from homology"/>